<keyword id="KW-0002">3D-structure</keyword>
<keyword id="KW-0058">Aromatic hydrocarbons catabolism</keyword>
<keyword id="KW-0210">Decarboxylase</keyword>
<keyword id="KW-0285">Flavoprotein</keyword>
<keyword id="KW-0288">FMN</keyword>
<keyword id="KW-0456">Lyase</keyword>
<keyword id="KW-0464">Manganese</keyword>
<keyword id="KW-0479">Metal-binding</keyword>
<keyword id="KW-0630">Potassium</keyword>
<keyword id="KW-1185">Reference proteome</keyword>
<protein>
    <recommendedName>
        <fullName evidence="1 6">Pyrrole-2-carboxylic acid decarboxylase</fullName>
        <shortName evidence="1 6">P2C decarboxylase</shortName>
        <ecNumber evidence="1 4">4.1.1.93</ecNumber>
    </recommendedName>
    <alternativeName>
        <fullName evidence="7">Ferulic acid decarboxylase-like protein</fullName>
    </alternativeName>
    <alternativeName>
        <fullName evidence="5">Homologous to UbiD protein A</fullName>
    </alternativeName>
    <alternativeName>
        <fullName evidence="8">UbiD-like decarboxylase</fullName>
    </alternativeName>
</protein>
<organism>
    <name type="scientific">Pseudomonas aeruginosa (strain ATCC 15692 / DSM 22644 / CIP 104116 / JCM 14847 / LMG 12228 / 1C / PRS 101 / PAO1)</name>
    <dbReference type="NCBI Taxonomy" id="208964"/>
    <lineage>
        <taxon>Bacteria</taxon>
        <taxon>Pseudomonadati</taxon>
        <taxon>Pseudomonadota</taxon>
        <taxon>Gammaproteobacteria</taxon>
        <taxon>Pseudomonadales</taxon>
        <taxon>Pseudomonadaceae</taxon>
        <taxon>Pseudomonas</taxon>
    </lineage>
</organism>
<evidence type="ECO:0000255" key="1">
    <source>
        <dbReference type="HAMAP-Rule" id="MF_01983"/>
    </source>
</evidence>
<evidence type="ECO:0000269" key="2">
    <source>
    </source>
</evidence>
<evidence type="ECO:0000269" key="3">
    <source>
    </source>
</evidence>
<evidence type="ECO:0000269" key="4">
    <source>
    </source>
</evidence>
<evidence type="ECO:0000303" key="5">
    <source>
    </source>
</evidence>
<evidence type="ECO:0000303" key="6">
    <source>
    </source>
</evidence>
<evidence type="ECO:0000305" key="7"/>
<evidence type="ECO:0000305" key="8">
    <source>
    </source>
</evidence>
<evidence type="ECO:0000305" key="9">
    <source>
    </source>
</evidence>
<evidence type="ECO:0007744" key="10">
    <source>
        <dbReference type="PDB" id="4IP2"/>
    </source>
</evidence>
<evidence type="ECO:0007744" key="11">
    <source>
        <dbReference type="PDB" id="4IWS"/>
    </source>
</evidence>
<evidence type="ECO:0007744" key="12">
    <source>
        <dbReference type="PDB" id="7ABN"/>
    </source>
</evidence>
<evidence type="ECO:0007744" key="13">
    <source>
        <dbReference type="PDB" id="7ABO"/>
    </source>
</evidence>
<evidence type="ECO:0007829" key="14">
    <source>
        <dbReference type="PDB" id="7ABN"/>
    </source>
</evidence>
<gene>
    <name evidence="5" type="primary">hudA</name>
    <name type="ordered locus">PA0254</name>
</gene>
<accession>Q9I6N5</accession>
<proteinExistence type="evidence at protein level"/>
<sequence>MNRSALDFRHFVDHLRRQGDLVDVHTEVDANLEIGAITRRVYERRAPAPLFHNIRDSLPGARVLGAPAGLRADRARAHSRLALHFGLPEHSGPRDIVAMLRAAMRAEPIAPRRLERGPVQENVWLGEQVDLTRFPVPLLHEQDGGRYFGTYGFHVVQTPDGSWDSWSVGRLMLVDRNTLAGPTIPTQHIGIIREQWRRLGKPTPWAMALGAPPAALAAAGMPLPEGVSEAGYVGALVGEPVEVVRTQTNGLWVPANTEIVLEGEISLDETALEGPMGEYHGYSFPIGKPQPLFHVHALSFRDQPILPICVAGTPPEENHTIWGTMISAQLLDVAQNAGLPVDMVWCSYEAATCWAVLSIDVQRLAALGTDAAAFAARVAETVFGSHAGHLVPKLILVGNDIDVTEIDQVVWALATRAHPLHDHFAFPQIRDFPMVPYLDAEDKARGSGGRLVINCLYPEQFAGQMRAATASFRHAYPTALRRRVEERWSDYGFGDA</sequence>
<dbReference type="EC" id="4.1.1.93" evidence="1 4"/>
<dbReference type="EMBL" id="AE004091">
    <property type="protein sequence ID" value="AAG03643.1"/>
    <property type="molecule type" value="Genomic_DNA"/>
</dbReference>
<dbReference type="PIR" id="D83614">
    <property type="entry name" value="D83614"/>
</dbReference>
<dbReference type="RefSeq" id="NP_248945.1">
    <property type="nucleotide sequence ID" value="NC_002516.2"/>
</dbReference>
<dbReference type="RefSeq" id="WP_003115722.1">
    <property type="nucleotide sequence ID" value="NZ_QZGE01000024.1"/>
</dbReference>
<dbReference type="PDB" id="4IP2">
    <property type="method" value="X-ray"/>
    <property type="resolution" value="1.95 A"/>
    <property type="chains" value="A/B/C=1-496"/>
</dbReference>
<dbReference type="PDB" id="4IWS">
    <property type="method" value="X-ray"/>
    <property type="resolution" value="2.30 A"/>
    <property type="chains" value="A/B/C/D=1-496"/>
</dbReference>
<dbReference type="PDB" id="7ABN">
    <property type="method" value="X-ray"/>
    <property type="resolution" value="1.65 A"/>
    <property type="chains" value="A/D/H/M=1-496"/>
</dbReference>
<dbReference type="PDB" id="7ABO">
    <property type="method" value="X-ray"/>
    <property type="resolution" value="1.95 A"/>
    <property type="chains" value="A/B/C/D=1-496"/>
</dbReference>
<dbReference type="PDBsum" id="4IP2"/>
<dbReference type="PDBsum" id="4IWS"/>
<dbReference type="PDBsum" id="7ABN"/>
<dbReference type="PDBsum" id="7ABO"/>
<dbReference type="SMR" id="Q9I6N5"/>
<dbReference type="STRING" id="208964.PA0254"/>
<dbReference type="PaxDb" id="208964-PA0254"/>
<dbReference type="GeneID" id="881878"/>
<dbReference type="KEGG" id="pae:PA0254"/>
<dbReference type="PATRIC" id="fig|208964.12.peg.264"/>
<dbReference type="PseudoCAP" id="PA0254"/>
<dbReference type="HOGENOM" id="CLU_023348_0_0_6"/>
<dbReference type="InParanoid" id="Q9I6N5"/>
<dbReference type="OrthoDB" id="9809841at2"/>
<dbReference type="PhylomeDB" id="Q9I6N5"/>
<dbReference type="BioCyc" id="PAER208964:G1FZ6-256-MONOMER"/>
<dbReference type="EvolutionaryTrace" id="Q9I6N5"/>
<dbReference type="Proteomes" id="UP000002438">
    <property type="component" value="Chromosome"/>
</dbReference>
<dbReference type="GO" id="GO:0005737">
    <property type="term" value="C:cytoplasm"/>
    <property type="evidence" value="ECO:0000318"/>
    <property type="project" value="GO_Central"/>
</dbReference>
<dbReference type="GO" id="GO:0005829">
    <property type="term" value="C:cytosol"/>
    <property type="evidence" value="ECO:0000318"/>
    <property type="project" value="GO_Central"/>
</dbReference>
<dbReference type="GO" id="GO:0008694">
    <property type="term" value="F:3-octaprenyl-4-hydroxybenzoate carboxy-lyase activity"/>
    <property type="evidence" value="ECO:0000318"/>
    <property type="project" value="GO_Central"/>
</dbReference>
<dbReference type="GO" id="GO:0046872">
    <property type="term" value="F:metal ion binding"/>
    <property type="evidence" value="ECO:0007669"/>
    <property type="project" value="UniProtKB-KW"/>
</dbReference>
<dbReference type="GO" id="GO:0009056">
    <property type="term" value="P:catabolic process"/>
    <property type="evidence" value="ECO:0007669"/>
    <property type="project" value="UniProtKB-KW"/>
</dbReference>
<dbReference type="GO" id="GO:0006744">
    <property type="term" value="P:ubiquinone biosynthetic process"/>
    <property type="evidence" value="ECO:0000318"/>
    <property type="project" value="GO_Central"/>
</dbReference>
<dbReference type="Gene3D" id="1.20.5.4570">
    <property type="match status" value="1"/>
</dbReference>
<dbReference type="Gene3D" id="3.40.1670.10">
    <property type="entry name" value="UbiD C-terminal domain-like"/>
    <property type="match status" value="1"/>
</dbReference>
<dbReference type="HAMAP" id="MF_01983">
    <property type="entry name" value="UbiD_FDC"/>
    <property type="match status" value="1"/>
</dbReference>
<dbReference type="InterPro" id="IPR032903">
    <property type="entry name" value="FDC-like"/>
</dbReference>
<dbReference type="InterPro" id="IPR002830">
    <property type="entry name" value="UbiD"/>
</dbReference>
<dbReference type="InterPro" id="IPR049381">
    <property type="entry name" value="UbiD-like_C"/>
</dbReference>
<dbReference type="InterPro" id="IPR049383">
    <property type="entry name" value="UbiD-like_N"/>
</dbReference>
<dbReference type="InterPro" id="IPR048304">
    <property type="entry name" value="UbiD_Rift_dom"/>
</dbReference>
<dbReference type="NCBIfam" id="TIGR00148">
    <property type="entry name" value="UbiD family decarboxylase"/>
    <property type="match status" value="1"/>
</dbReference>
<dbReference type="PANTHER" id="PTHR30108">
    <property type="entry name" value="3-OCTAPRENYL-4-HYDROXYBENZOATE CARBOXY-LYASE-RELATED"/>
    <property type="match status" value="1"/>
</dbReference>
<dbReference type="PANTHER" id="PTHR30108:SF17">
    <property type="entry name" value="FERULIC ACID DECARBOXYLASE 1"/>
    <property type="match status" value="1"/>
</dbReference>
<dbReference type="Pfam" id="PF01977">
    <property type="entry name" value="UbiD"/>
    <property type="match status" value="1"/>
</dbReference>
<dbReference type="Pfam" id="PF20696">
    <property type="entry name" value="UbiD_C"/>
    <property type="match status" value="1"/>
</dbReference>
<dbReference type="Pfam" id="PF20695">
    <property type="entry name" value="UbiD_N"/>
    <property type="match status" value="1"/>
</dbReference>
<dbReference type="SUPFAM" id="SSF50475">
    <property type="entry name" value="FMN-binding split barrel"/>
    <property type="match status" value="1"/>
</dbReference>
<dbReference type="SUPFAM" id="SSF143968">
    <property type="entry name" value="UbiD C-terminal domain-like"/>
    <property type="match status" value="1"/>
</dbReference>
<comment type="function">
    <text evidence="2 4">Catalyzes the prenyl-FMN-dependent decarboxylation of pyrrole-2-carboxylate (P2C) (PubMed:33763291). Can also catalyze the carboxylation of pyrrole in the presence of elevated concentrations of CO(2) or bicarbonate (PubMed:33763291). Can accept a modest range of heteroaromatic compounds such as 3-methylpyrrole-2-carboxylate, indole-3-carboxylate and furan-2-carboxylate, and shows very low activity with thiophene-2-carboxylate (PubMed:33763291). Attenuates the virulence of P.aeruginosa in a Drosophila model when overexpressed (PubMed:18591226).</text>
</comment>
<comment type="catalytic activity">
    <reaction evidence="1 4">
        <text>pyrrole-2-carboxylate + H(+) = 1H-pyrrole + CO2</text>
        <dbReference type="Rhea" id="RHEA:31375"/>
        <dbReference type="ChEBI" id="CHEBI:15378"/>
        <dbReference type="ChEBI" id="CHEBI:16526"/>
        <dbReference type="ChEBI" id="CHEBI:19203"/>
        <dbReference type="ChEBI" id="CHEBI:27660"/>
        <dbReference type="EC" id="4.1.1.93"/>
    </reaction>
</comment>
<comment type="catalytic activity">
    <reaction evidence="1 4">
        <text>pyrrole-2-carboxylate + H2O = 1H-pyrrole + hydrogencarbonate</text>
        <dbReference type="Rhea" id="RHEA:31379"/>
        <dbReference type="ChEBI" id="CHEBI:15377"/>
        <dbReference type="ChEBI" id="CHEBI:17544"/>
        <dbReference type="ChEBI" id="CHEBI:19203"/>
        <dbReference type="ChEBI" id="CHEBI:27660"/>
        <dbReference type="EC" id="4.1.1.93"/>
    </reaction>
</comment>
<comment type="cofactor">
    <cofactor evidence="1 4">
        <name>prenylated FMN</name>
        <dbReference type="ChEBI" id="CHEBI:87746"/>
    </cofactor>
    <text evidence="1 4">Binds 1 prenylated FMN per subunit.</text>
</comment>
<comment type="cofactor">
    <cofactor evidence="1 3 4">
        <name>Mn(2+)</name>
        <dbReference type="ChEBI" id="CHEBI:29035"/>
    </cofactor>
    <text evidence="3 4">Binds 1 Mn(2+) per subunit (PubMed:23671667, PubMed:33763291). Can also use Mg(2+), with lower efficiency (PubMed:33763291).</text>
</comment>
<comment type="cofactor">
    <cofactor evidence="1 4">
        <name>K(+)</name>
        <dbReference type="ChEBI" id="CHEBI:29103"/>
    </cofactor>
    <text evidence="1 4">Binds 1 K(+) per subunit.</text>
</comment>
<comment type="activity regulation">
    <text evidence="4">Imidazole acts as a reversible inhibitor via the formation of an imidazole-prenyl-FMN adduct (PubMed:33763291). Activity is light sensitive (PubMed:33763291).</text>
</comment>
<comment type="biophysicochemical properties">
    <kinetics>
        <KM evidence="4">4.3 mM for pyrrole-2-carboxylate</KM>
        <text evidence="4">kcat is 35.8 sec(-1) with pyrrole-2-carboxylate as substrate.</text>
    </kinetics>
</comment>
<comment type="subunit">
    <text evidence="1 3 4">Homodimer.</text>
</comment>
<comment type="induction">
    <text evidence="2">Repressed by hudR.</text>
</comment>
<comment type="domain">
    <text evidence="3">Consists of three domains: an N-terminal alpha/beta domain, a split beta-barrel with a similar fold of a family of flavin reductases and a C-terminal alpha/beta domain with a topology characteristic for the UbiD protein family.</text>
</comment>
<comment type="similarity">
    <text evidence="1 9">Belongs to the UbiD family. UbiD-like/FDC subfamily.</text>
</comment>
<reference key="1">
    <citation type="journal article" date="2000" name="Nature">
        <title>Complete genome sequence of Pseudomonas aeruginosa PAO1, an opportunistic pathogen.</title>
        <authorList>
            <person name="Stover C.K."/>
            <person name="Pham X.-Q.T."/>
            <person name="Erwin A.L."/>
            <person name="Mizoguchi S.D."/>
            <person name="Warrener P."/>
            <person name="Hickey M.J."/>
            <person name="Brinkman F.S.L."/>
            <person name="Hufnagle W.O."/>
            <person name="Kowalik D.J."/>
            <person name="Lagrou M."/>
            <person name="Garber R.L."/>
            <person name="Goltry L."/>
            <person name="Tolentino E."/>
            <person name="Westbrock-Wadman S."/>
            <person name="Yuan Y."/>
            <person name="Brody L.L."/>
            <person name="Coulter S.N."/>
            <person name="Folger K.R."/>
            <person name="Kas A."/>
            <person name="Larbig K."/>
            <person name="Lim R.M."/>
            <person name="Smith K.A."/>
            <person name="Spencer D.H."/>
            <person name="Wong G.K.-S."/>
            <person name="Wu Z."/>
            <person name="Paulsen I.T."/>
            <person name="Reizer J."/>
            <person name="Saier M.H. Jr."/>
            <person name="Hancock R.E.W."/>
            <person name="Lory S."/>
            <person name="Olson M.V."/>
        </authorList>
    </citation>
    <scope>NUCLEOTIDE SEQUENCE [LARGE SCALE GENOMIC DNA]</scope>
    <source>
        <strain>ATCC 15692 / DSM 22644 / CIP 104116 / JCM 14847 / LMG 12228 / 1C / PRS 101 / PAO1</strain>
    </source>
</reference>
<reference key="2">
    <citation type="journal article" date="2008" name="Infect. Immun.">
        <title>Drosophila melanogaster-based screening for multihost virulence factors of Pseudomonas aeruginosa PA14 and identification of a virulence-attenuating factor, HudA.</title>
        <authorList>
            <person name="Kim S.H."/>
            <person name="Park S.Y."/>
            <person name="Heo Y.J."/>
            <person name="Cho Y.H."/>
        </authorList>
    </citation>
    <scope>INDUCTION</scope>
    <scope>OVEREXPRESSION</scope>
</reference>
<reference evidence="10 11" key="3">
    <citation type="journal article" date="2013" name="PLoS ONE">
        <title>Structural insights into the UbiD protein family from the crystal structure of PA0254 from Pseudomonas aeruginosa.</title>
        <authorList>
            <person name="Jacewicz A."/>
            <person name="Izumi A."/>
            <person name="Brunner K."/>
            <person name="Schnell R."/>
            <person name="Schneider G."/>
        </authorList>
    </citation>
    <scope>X-RAY CRYSTALLOGRAPHY (1.95 ANGSTROMS) IN COMPLEX WITH MANGANESE</scope>
    <scope>SUBUNIT</scope>
    <scope>DOMAIN</scope>
</reference>
<reference evidence="12 13" key="4">
    <citation type="journal article" date="2021" name="ACS Catal.">
        <title>Structure and mechanism of Pseudomonas aeruginosa PA0254/HudA, a prFMN-dependent pyrrole-2-carboxylic acid decarboxylase linked to virulence.</title>
        <authorList>
            <person name="Payne K.A.P."/>
            <person name="Marshall S.A."/>
            <person name="Fisher K."/>
            <person name="Rigby S.E.J."/>
            <person name="Cliff M.J."/>
            <person name="Spiess R."/>
            <person name="Cannas D.M."/>
            <person name="Larrosa I."/>
            <person name="Hay S."/>
            <person name="Leys D."/>
        </authorList>
    </citation>
    <scope>X-RAY CRYSTALLOGRAPHY (1.65 ANGSTROMS) OF WILD-TYPE IN COMPLEX WITH PRENYL-FMN; IMIDAZOLE; MANGANESE AND POTASSIUM AND MUTANT HIS-318 IN COMPLEX WITH FMN; MANGANESE AND SODIUM</scope>
    <scope>FUNCTION</scope>
    <scope>CATALYTIC ACTIVITY</scope>
    <scope>COFACTOR</scope>
    <scope>ACTIVITY REGULATION</scope>
    <scope>BIOPHYSICOCHEMICAL PROPERTIES</scope>
    <scope>SUBUNIT</scope>
    <scope>MUTAGENESIS OF ASN-318</scope>
</reference>
<name>P2CDC_PSEAE</name>
<feature type="chain" id="PRO_0000434525" description="Pyrrole-2-carboxylic acid decarboxylase">
    <location>
        <begin position="1"/>
        <end position="496"/>
    </location>
</feature>
<feature type="active site" description="Proton donor" evidence="1">
    <location>
        <position position="278"/>
    </location>
</feature>
<feature type="binding site" evidence="1 4 12 13">
    <location>
        <position position="166"/>
    </location>
    <ligand>
        <name>K(+)</name>
        <dbReference type="ChEBI" id="CHEBI:29103"/>
    </ligand>
</feature>
<feature type="binding site" evidence="1 4 12">
    <location>
        <position position="168"/>
    </location>
    <ligand>
        <name>prenylated FMN</name>
        <dbReference type="ChEBI" id="CHEBI:87746"/>
    </ligand>
</feature>
<feature type="binding site" evidence="1 4 12">
    <location>
        <position position="170"/>
    </location>
    <ligand>
        <name>prenylated FMN</name>
        <dbReference type="ChEBI" id="CHEBI:87746"/>
    </ligand>
</feature>
<feature type="binding site" evidence="1 4 12">
    <location>
        <position position="187"/>
    </location>
    <ligand>
        <name>prenylated FMN</name>
        <dbReference type="ChEBI" id="CHEBI:87746"/>
    </ligand>
</feature>
<feature type="binding site" evidence="1 3 4 10 12 13">
    <location>
        <position position="188"/>
    </location>
    <ligand>
        <name>Mn(2+)</name>
        <dbReference type="ChEBI" id="CHEBI:29035"/>
    </ligand>
</feature>
<feature type="binding site" evidence="1 4 12">
    <location>
        <position position="188"/>
    </location>
    <ligand>
        <name>prenylated FMN</name>
        <dbReference type="ChEBI" id="CHEBI:87746"/>
    </ligand>
</feature>
<feature type="binding site" evidence="1 4 12 13">
    <location>
        <position position="218"/>
    </location>
    <ligand>
        <name>K(+)</name>
        <dbReference type="ChEBI" id="CHEBI:29103"/>
    </ligand>
</feature>
<feature type="binding site" evidence="1 4 12 13">
    <location>
        <position position="219"/>
    </location>
    <ligand>
        <name>K(+)</name>
        <dbReference type="ChEBI" id="CHEBI:29103"/>
    </ligand>
</feature>
<feature type="binding site" evidence="1 4 12 13">
    <location>
        <position position="221"/>
    </location>
    <ligand>
        <name>K(+)</name>
        <dbReference type="ChEBI" id="CHEBI:29103"/>
    </ligand>
</feature>
<feature type="binding site" evidence="1 4 12 13">
    <location>
        <position position="229"/>
    </location>
    <ligand>
        <name>K(+)</name>
        <dbReference type="ChEBI" id="CHEBI:29103"/>
    </ligand>
</feature>
<feature type="binding site" evidence="1 3 4 10 12 13">
    <location>
        <position position="229"/>
    </location>
    <ligand>
        <name>Mn(2+)</name>
        <dbReference type="ChEBI" id="CHEBI:29035"/>
    </ligand>
</feature>
<feature type="binding site" evidence="1 4 12">
    <location>
        <position position="229"/>
    </location>
    <ligand>
        <name>prenylated FMN</name>
        <dbReference type="ChEBI" id="CHEBI:87746"/>
    </ligand>
</feature>
<feature type="binding site" evidence="1 4 12">
    <location>
        <position position="386"/>
    </location>
    <ligand>
        <name>prenylated FMN</name>
        <dbReference type="ChEBI" id="CHEBI:87746"/>
    </ligand>
</feature>
<feature type="mutagenesis site" description="Decreases activity with pyrrole-2-carboxylic acid, but increases activity with furan-2-carboxylate." evidence="4">
    <original>N</original>
    <variation>C</variation>
    <variation>S</variation>
    <location>
        <position position="318"/>
    </location>
</feature>
<feature type="mutagenesis site" description="No change in activity." evidence="4">
    <original>N</original>
    <variation>D</variation>
    <location>
        <position position="318"/>
    </location>
</feature>
<feature type="mutagenesis site" description="Prevents prenyl-FMN binding." evidence="4">
    <original>N</original>
    <variation>H</variation>
    <location>
        <position position="318"/>
    </location>
</feature>
<feature type="helix" evidence="14">
    <location>
        <begin position="2"/>
        <end position="6"/>
    </location>
</feature>
<feature type="helix" evidence="14">
    <location>
        <begin position="8"/>
        <end position="17"/>
    </location>
</feature>
<feature type="strand" evidence="14">
    <location>
        <begin position="21"/>
        <end position="28"/>
    </location>
</feature>
<feature type="helix" evidence="14">
    <location>
        <begin position="33"/>
        <end position="44"/>
    </location>
</feature>
<feature type="strand" evidence="14">
    <location>
        <begin position="48"/>
        <end position="54"/>
    </location>
</feature>
<feature type="strand" evidence="14">
    <location>
        <begin position="62"/>
        <end position="64"/>
    </location>
</feature>
<feature type="helix" evidence="14">
    <location>
        <begin position="74"/>
        <end position="76"/>
    </location>
</feature>
<feature type="helix" evidence="14">
    <location>
        <begin position="79"/>
        <end position="82"/>
    </location>
</feature>
<feature type="helix" evidence="14">
    <location>
        <begin position="83"/>
        <end position="85"/>
    </location>
</feature>
<feature type="helix" evidence="14">
    <location>
        <begin position="93"/>
        <end position="105"/>
    </location>
</feature>
<feature type="helix" evidence="14">
    <location>
        <begin position="118"/>
        <end position="120"/>
    </location>
</feature>
<feature type="strand" evidence="14">
    <location>
        <begin position="121"/>
        <end position="125"/>
    </location>
</feature>
<feature type="helix" evidence="14">
    <location>
        <begin position="126"/>
        <end position="128"/>
    </location>
</feature>
<feature type="helix" evidence="14">
    <location>
        <begin position="131"/>
        <end position="133"/>
    </location>
</feature>
<feature type="strand" evidence="14">
    <location>
        <begin position="147"/>
        <end position="157"/>
    </location>
</feature>
<feature type="strand" evidence="14">
    <location>
        <begin position="164"/>
        <end position="168"/>
    </location>
</feature>
<feature type="strand" evidence="14">
    <location>
        <begin position="171"/>
        <end position="175"/>
    </location>
</feature>
<feature type="strand" evidence="14">
    <location>
        <begin position="178"/>
        <end position="180"/>
    </location>
</feature>
<feature type="helix" evidence="14">
    <location>
        <begin position="188"/>
        <end position="198"/>
    </location>
</feature>
<feature type="strand" evidence="14">
    <location>
        <begin position="203"/>
        <end position="210"/>
    </location>
</feature>
<feature type="helix" evidence="14">
    <location>
        <begin position="213"/>
        <end position="219"/>
    </location>
</feature>
<feature type="helix" evidence="14">
    <location>
        <begin position="229"/>
        <end position="237"/>
    </location>
</feature>
<feature type="strand" evidence="14">
    <location>
        <begin position="242"/>
        <end position="245"/>
    </location>
</feature>
<feature type="strand" evidence="14">
    <location>
        <begin position="247"/>
        <end position="249"/>
    </location>
</feature>
<feature type="strand" evidence="14">
    <location>
        <begin position="252"/>
        <end position="254"/>
    </location>
</feature>
<feature type="strand" evidence="14">
    <location>
        <begin position="258"/>
        <end position="273"/>
    </location>
</feature>
<feature type="strand" evidence="14">
    <location>
        <begin position="281"/>
        <end position="283"/>
    </location>
</feature>
<feature type="strand" evidence="14">
    <location>
        <begin position="288"/>
        <end position="300"/>
    </location>
</feature>
<feature type="strand" evidence="14">
    <location>
        <begin position="305"/>
        <end position="307"/>
    </location>
</feature>
<feature type="strand" evidence="14">
    <location>
        <begin position="312"/>
        <end position="316"/>
    </location>
</feature>
<feature type="helix" evidence="14">
    <location>
        <begin position="317"/>
        <end position="320"/>
    </location>
</feature>
<feature type="helix" evidence="14">
    <location>
        <begin position="322"/>
        <end position="336"/>
    </location>
</feature>
<feature type="strand" evidence="14">
    <location>
        <begin position="341"/>
        <end position="345"/>
    </location>
</feature>
<feature type="helix" evidence="14">
    <location>
        <begin position="348"/>
        <end position="350"/>
    </location>
</feature>
<feature type="strand" evidence="14">
    <location>
        <begin position="353"/>
        <end position="359"/>
    </location>
</feature>
<feature type="helix" evidence="14">
    <location>
        <begin position="361"/>
        <end position="364"/>
    </location>
</feature>
<feature type="helix" evidence="14">
    <location>
        <begin position="365"/>
        <end position="367"/>
    </location>
</feature>
<feature type="helix" evidence="14">
    <location>
        <begin position="371"/>
        <end position="383"/>
    </location>
</feature>
<feature type="helix" evidence="14">
    <location>
        <begin position="388"/>
        <end position="390"/>
    </location>
</feature>
<feature type="strand" evidence="14">
    <location>
        <begin position="393"/>
        <end position="398"/>
    </location>
</feature>
<feature type="helix" evidence="14">
    <location>
        <begin position="406"/>
        <end position="416"/>
    </location>
</feature>
<feature type="turn" evidence="14">
    <location>
        <begin position="419"/>
        <end position="421"/>
    </location>
</feature>
<feature type="strand" evidence="14">
    <location>
        <begin position="422"/>
        <end position="425"/>
    </location>
</feature>
<feature type="helix" evidence="14">
    <location>
        <begin position="440"/>
        <end position="445"/>
    </location>
</feature>
<feature type="strand" evidence="14">
    <location>
        <begin position="451"/>
        <end position="454"/>
    </location>
</feature>
<feature type="helix" evidence="14">
    <location>
        <begin position="458"/>
        <end position="462"/>
    </location>
</feature>
<feature type="strand" evidence="14">
    <location>
        <begin position="466"/>
        <end position="469"/>
    </location>
</feature>
<feature type="turn" evidence="14">
    <location>
        <begin position="472"/>
        <end position="474"/>
    </location>
</feature>
<feature type="helix" evidence="14">
    <location>
        <begin position="478"/>
        <end position="491"/>
    </location>
</feature>
<feature type="turn" evidence="14">
    <location>
        <begin position="492"/>
        <end position="495"/>
    </location>
</feature>